<protein>
    <recommendedName>
        <fullName>Superoxide dismutase [Cu-Zn]</fullName>
        <ecNumber>1.15.1.1</ecNumber>
    </recommendedName>
</protein>
<gene>
    <name type="primary">SODCC</name>
</gene>
<reference key="1">
    <citation type="journal article" date="1996" name="Plant Sci.">
        <title>Different transcriptional regulation of cytosolic and plastidic Cu/Zn-superoxide dismutase genes in Solidago altissima (Asteraceae).</title>
        <authorList>
            <person name="Murai R."/>
            <person name="Murai K."/>
        </authorList>
    </citation>
    <scope>NUCLEOTIDE SEQUENCE [MRNA]</scope>
    <source>
        <strain>cv. Nonoichi-Machi</strain>
    </source>
</reference>
<name>SODC_SOLCS</name>
<feature type="initiator methionine" description="Removed" evidence="1">
    <location>
        <position position="1"/>
    </location>
</feature>
<feature type="chain" id="PRO_0000164155" description="Superoxide dismutase [Cu-Zn]">
    <location>
        <begin position="2"/>
        <end position="153"/>
    </location>
</feature>
<feature type="binding site" evidence="1">
    <location>
        <position position="46"/>
    </location>
    <ligand>
        <name>Cu cation</name>
        <dbReference type="ChEBI" id="CHEBI:23378"/>
        <note>catalytic</note>
    </ligand>
</feature>
<feature type="binding site" evidence="1">
    <location>
        <position position="48"/>
    </location>
    <ligand>
        <name>Cu cation</name>
        <dbReference type="ChEBI" id="CHEBI:23378"/>
        <note>catalytic</note>
    </ligand>
</feature>
<feature type="binding site" evidence="1">
    <location>
        <position position="63"/>
    </location>
    <ligand>
        <name>Cu cation</name>
        <dbReference type="ChEBI" id="CHEBI:23378"/>
        <note>catalytic</note>
    </ligand>
</feature>
<feature type="binding site" evidence="1">
    <location>
        <position position="63"/>
    </location>
    <ligand>
        <name>Zn(2+)</name>
        <dbReference type="ChEBI" id="CHEBI:29105"/>
        <note>structural</note>
    </ligand>
</feature>
<feature type="binding site" evidence="1">
    <location>
        <position position="71"/>
    </location>
    <ligand>
        <name>Zn(2+)</name>
        <dbReference type="ChEBI" id="CHEBI:29105"/>
        <note>structural</note>
    </ligand>
</feature>
<feature type="binding site" evidence="1">
    <location>
        <position position="80"/>
    </location>
    <ligand>
        <name>Zn(2+)</name>
        <dbReference type="ChEBI" id="CHEBI:29105"/>
        <note>structural</note>
    </ligand>
</feature>
<feature type="binding site" evidence="1">
    <location>
        <position position="83"/>
    </location>
    <ligand>
        <name>Zn(2+)</name>
        <dbReference type="ChEBI" id="CHEBI:29105"/>
        <note>structural</note>
    </ligand>
</feature>
<feature type="binding site" evidence="1">
    <location>
        <position position="120"/>
    </location>
    <ligand>
        <name>Cu cation</name>
        <dbReference type="ChEBI" id="CHEBI:23378"/>
        <note>catalytic</note>
    </ligand>
</feature>
<feature type="disulfide bond" evidence="1">
    <location>
        <begin position="57"/>
        <end position="146"/>
    </location>
</feature>
<proteinExistence type="evidence at transcript level"/>
<accession>O04996</accession>
<sequence>MVKAVAVLSSSEGVSGTIFFSQEAEGAPTTVTGDLSGLKPGPHGFHVHALGDTTNGCMSTGPHYNPHGKDHGAPDDEHRHAGDLGNVTVGEDGTAKFTIVDKQIPLIGAQSIIGRAVVVHADPDDLGKGGHELSKTTGNAGGRVACGIIGLQG</sequence>
<dbReference type="EC" id="1.15.1.1"/>
<dbReference type="EMBL" id="D49485">
    <property type="protein sequence ID" value="BAA19674.1"/>
    <property type="molecule type" value="mRNA"/>
</dbReference>
<dbReference type="SMR" id="O04996"/>
<dbReference type="GO" id="GO:0005737">
    <property type="term" value="C:cytoplasm"/>
    <property type="evidence" value="ECO:0007669"/>
    <property type="project" value="UniProtKB-SubCell"/>
</dbReference>
<dbReference type="GO" id="GO:0005507">
    <property type="term" value="F:copper ion binding"/>
    <property type="evidence" value="ECO:0007669"/>
    <property type="project" value="InterPro"/>
</dbReference>
<dbReference type="GO" id="GO:0004784">
    <property type="term" value="F:superoxide dismutase activity"/>
    <property type="evidence" value="ECO:0007669"/>
    <property type="project" value="UniProtKB-EC"/>
</dbReference>
<dbReference type="CDD" id="cd00305">
    <property type="entry name" value="Cu-Zn_Superoxide_Dismutase"/>
    <property type="match status" value="1"/>
</dbReference>
<dbReference type="FunFam" id="2.60.40.200:FF:000001">
    <property type="entry name" value="Superoxide dismutase [Cu-Zn]"/>
    <property type="match status" value="1"/>
</dbReference>
<dbReference type="Gene3D" id="2.60.40.200">
    <property type="entry name" value="Superoxide dismutase, copper/zinc binding domain"/>
    <property type="match status" value="1"/>
</dbReference>
<dbReference type="InterPro" id="IPR036423">
    <property type="entry name" value="SOD-like_Cu/Zn_dom_sf"/>
</dbReference>
<dbReference type="InterPro" id="IPR024134">
    <property type="entry name" value="SOD_Cu/Zn_/chaperone"/>
</dbReference>
<dbReference type="InterPro" id="IPR018152">
    <property type="entry name" value="SOD_Cu/Zn_BS"/>
</dbReference>
<dbReference type="InterPro" id="IPR001424">
    <property type="entry name" value="SOD_Cu_Zn_dom"/>
</dbReference>
<dbReference type="PANTHER" id="PTHR10003">
    <property type="entry name" value="SUPEROXIDE DISMUTASE CU-ZN -RELATED"/>
    <property type="match status" value="1"/>
</dbReference>
<dbReference type="Pfam" id="PF00080">
    <property type="entry name" value="Sod_Cu"/>
    <property type="match status" value="1"/>
</dbReference>
<dbReference type="PRINTS" id="PR00068">
    <property type="entry name" value="CUZNDISMTASE"/>
</dbReference>
<dbReference type="SUPFAM" id="SSF49329">
    <property type="entry name" value="Cu,Zn superoxide dismutase-like"/>
    <property type="match status" value="1"/>
</dbReference>
<dbReference type="PROSITE" id="PS00087">
    <property type="entry name" value="SOD_CU_ZN_1"/>
    <property type="match status" value="1"/>
</dbReference>
<dbReference type="PROSITE" id="PS00332">
    <property type="entry name" value="SOD_CU_ZN_2"/>
    <property type="match status" value="1"/>
</dbReference>
<comment type="function">
    <text>Destroys radicals which are normally produced within the cells and which are toxic to biological systems.</text>
</comment>
<comment type="catalytic activity">
    <reaction>
        <text>2 superoxide + 2 H(+) = H2O2 + O2</text>
        <dbReference type="Rhea" id="RHEA:20696"/>
        <dbReference type="ChEBI" id="CHEBI:15378"/>
        <dbReference type="ChEBI" id="CHEBI:15379"/>
        <dbReference type="ChEBI" id="CHEBI:16240"/>
        <dbReference type="ChEBI" id="CHEBI:18421"/>
        <dbReference type="EC" id="1.15.1.1"/>
    </reaction>
</comment>
<comment type="cofactor">
    <cofactor evidence="1">
        <name>Cu cation</name>
        <dbReference type="ChEBI" id="CHEBI:23378"/>
    </cofactor>
    <text evidence="1">Binds 1 copper ion per subunit.</text>
</comment>
<comment type="cofactor">
    <cofactor evidence="1">
        <name>Zn(2+)</name>
        <dbReference type="ChEBI" id="CHEBI:29105"/>
    </cofactor>
    <text evidence="1">Binds 1 zinc ion per subunit.</text>
</comment>
<comment type="subunit">
    <text>Homodimer.</text>
</comment>
<comment type="subcellular location">
    <subcellularLocation>
        <location>Cytoplasm</location>
    </subcellularLocation>
</comment>
<comment type="similarity">
    <text evidence="2">Belongs to the Cu-Zn superoxide dismutase family.</text>
</comment>
<organism>
    <name type="scientific">Solidago canadensis var. scabra</name>
    <name type="common">Tall goldenrod</name>
    <name type="synonym">Solidago altissima</name>
    <dbReference type="NCBI Taxonomy" id="59294"/>
    <lineage>
        <taxon>Eukaryota</taxon>
        <taxon>Viridiplantae</taxon>
        <taxon>Streptophyta</taxon>
        <taxon>Embryophyta</taxon>
        <taxon>Tracheophyta</taxon>
        <taxon>Spermatophyta</taxon>
        <taxon>Magnoliopsida</taxon>
        <taxon>eudicotyledons</taxon>
        <taxon>Gunneridae</taxon>
        <taxon>Pentapetalae</taxon>
        <taxon>asterids</taxon>
        <taxon>campanulids</taxon>
        <taxon>Asterales</taxon>
        <taxon>Asteraceae</taxon>
        <taxon>Asteroideae</taxon>
        <taxon>Astereae</taxon>
        <taxon>North American clade</taxon>
        <taxon>Solidagininae</taxon>
        <taxon>Solidago</taxon>
    </lineage>
</organism>
<evidence type="ECO:0000250" key="1"/>
<evidence type="ECO:0000305" key="2"/>
<keyword id="KW-0049">Antioxidant</keyword>
<keyword id="KW-0186">Copper</keyword>
<keyword id="KW-0963">Cytoplasm</keyword>
<keyword id="KW-1015">Disulfide bond</keyword>
<keyword id="KW-0479">Metal-binding</keyword>
<keyword id="KW-0560">Oxidoreductase</keyword>
<keyword id="KW-0862">Zinc</keyword>